<reference key="1">
    <citation type="journal article" date="2009" name="PLoS Genet.">
        <title>Organised genome dynamics in the Escherichia coli species results in highly diverse adaptive paths.</title>
        <authorList>
            <person name="Touchon M."/>
            <person name="Hoede C."/>
            <person name="Tenaillon O."/>
            <person name="Barbe V."/>
            <person name="Baeriswyl S."/>
            <person name="Bidet P."/>
            <person name="Bingen E."/>
            <person name="Bonacorsi S."/>
            <person name="Bouchier C."/>
            <person name="Bouvet O."/>
            <person name="Calteau A."/>
            <person name="Chiapello H."/>
            <person name="Clermont O."/>
            <person name="Cruveiller S."/>
            <person name="Danchin A."/>
            <person name="Diard M."/>
            <person name="Dossat C."/>
            <person name="Karoui M.E."/>
            <person name="Frapy E."/>
            <person name="Garry L."/>
            <person name="Ghigo J.M."/>
            <person name="Gilles A.M."/>
            <person name="Johnson J."/>
            <person name="Le Bouguenec C."/>
            <person name="Lescat M."/>
            <person name="Mangenot S."/>
            <person name="Martinez-Jehanne V."/>
            <person name="Matic I."/>
            <person name="Nassif X."/>
            <person name="Oztas S."/>
            <person name="Petit M.A."/>
            <person name="Pichon C."/>
            <person name="Rouy Z."/>
            <person name="Ruf C.S."/>
            <person name="Schneider D."/>
            <person name="Tourret J."/>
            <person name="Vacherie B."/>
            <person name="Vallenet D."/>
            <person name="Medigue C."/>
            <person name="Rocha E.P.C."/>
            <person name="Denamur E."/>
        </authorList>
    </citation>
    <scope>NUCLEOTIDE SEQUENCE [LARGE SCALE GENOMIC DNA]</scope>
    <source>
        <strain>ED1a</strain>
    </source>
</reference>
<organism>
    <name type="scientific">Escherichia coli O81 (strain ED1a)</name>
    <dbReference type="NCBI Taxonomy" id="585397"/>
    <lineage>
        <taxon>Bacteria</taxon>
        <taxon>Pseudomonadati</taxon>
        <taxon>Pseudomonadota</taxon>
        <taxon>Gammaproteobacteria</taxon>
        <taxon>Enterobacterales</taxon>
        <taxon>Enterobacteriaceae</taxon>
        <taxon>Escherichia</taxon>
    </lineage>
</organism>
<dbReference type="EC" id="2.4.1.227" evidence="1"/>
<dbReference type="EMBL" id="CU928162">
    <property type="protein sequence ID" value="CAR06314.1"/>
    <property type="molecule type" value="Genomic_DNA"/>
</dbReference>
<dbReference type="RefSeq" id="WP_000016564.1">
    <property type="nucleotide sequence ID" value="NC_011745.1"/>
</dbReference>
<dbReference type="SMR" id="B7MNU9"/>
<dbReference type="CAZy" id="GT28">
    <property type="family name" value="Glycosyltransferase Family 28"/>
</dbReference>
<dbReference type="KEGG" id="ecq:ECED1_0091"/>
<dbReference type="HOGENOM" id="CLU_037404_2_0_6"/>
<dbReference type="UniPathway" id="UPA00219"/>
<dbReference type="Proteomes" id="UP000000748">
    <property type="component" value="Chromosome"/>
</dbReference>
<dbReference type="GO" id="GO:0005886">
    <property type="term" value="C:plasma membrane"/>
    <property type="evidence" value="ECO:0007669"/>
    <property type="project" value="UniProtKB-SubCell"/>
</dbReference>
<dbReference type="GO" id="GO:0051991">
    <property type="term" value="F:UDP-N-acetyl-D-glucosamine:N-acetylmuramoyl-L-alanyl-D-glutamyl-meso-2,6-diaminopimelyl-D-alanyl-D-alanine-diphosphoundecaprenol 4-beta-N-acetylglucosaminlytransferase activity"/>
    <property type="evidence" value="ECO:0007669"/>
    <property type="project" value="RHEA"/>
</dbReference>
<dbReference type="GO" id="GO:0050511">
    <property type="term" value="F:undecaprenyldiphospho-muramoylpentapeptide beta-N-acetylglucosaminyltransferase activity"/>
    <property type="evidence" value="ECO:0007669"/>
    <property type="project" value="UniProtKB-UniRule"/>
</dbReference>
<dbReference type="GO" id="GO:0005975">
    <property type="term" value="P:carbohydrate metabolic process"/>
    <property type="evidence" value="ECO:0007669"/>
    <property type="project" value="InterPro"/>
</dbReference>
<dbReference type="GO" id="GO:0051301">
    <property type="term" value="P:cell division"/>
    <property type="evidence" value="ECO:0007669"/>
    <property type="project" value="UniProtKB-KW"/>
</dbReference>
<dbReference type="GO" id="GO:0071555">
    <property type="term" value="P:cell wall organization"/>
    <property type="evidence" value="ECO:0007669"/>
    <property type="project" value="UniProtKB-KW"/>
</dbReference>
<dbReference type="GO" id="GO:0030259">
    <property type="term" value="P:lipid glycosylation"/>
    <property type="evidence" value="ECO:0007669"/>
    <property type="project" value="UniProtKB-UniRule"/>
</dbReference>
<dbReference type="GO" id="GO:0009252">
    <property type="term" value="P:peptidoglycan biosynthetic process"/>
    <property type="evidence" value="ECO:0007669"/>
    <property type="project" value="UniProtKB-UniRule"/>
</dbReference>
<dbReference type="GO" id="GO:0008360">
    <property type="term" value="P:regulation of cell shape"/>
    <property type="evidence" value="ECO:0007669"/>
    <property type="project" value="UniProtKB-KW"/>
</dbReference>
<dbReference type="CDD" id="cd03785">
    <property type="entry name" value="GT28_MurG"/>
    <property type="match status" value="1"/>
</dbReference>
<dbReference type="FunFam" id="3.40.50.2000:FF:000016">
    <property type="entry name" value="UDP-N-acetylglucosamine--N-acetylmuramyl-(pentapeptide) pyrophosphoryl-undecaprenol N-acetylglucosamine transferase"/>
    <property type="match status" value="1"/>
</dbReference>
<dbReference type="FunFam" id="3.40.50.2000:FF:000018">
    <property type="entry name" value="UDP-N-acetylglucosamine--N-acetylmuramyl-(pentapeptide) pyrophosphoryl-undecaprenol N-acetylglucosamine transferase"/>
    <property type="match status" value="1"/>
</dbReference>
<dbReference type="Gene3D" id="3.40.50.2000">
    <property type="entry name" value="Glycogen Phosphorylase B"/>
    <property type="match status" value="2"/>
</dbReference>
<dbReference type="HAMAP" id="MF_00033">
    <property type="entry name" value="MurG"/>
    <property type="match status" value="1"/>
</dbReference>
<dbReference type="InterPro" id="IPR006009">
    <property type="entry name" value="GlcNAc_MurG"/>
</dbReference>
<dbReference type="InterPro" id="IPR007235">
    <property type="entry name" value="Glyco_trans_28_C"/>
</dbReference>
<dbReference type="InterPro" id="IPR004276">
    <property type="entry name" value="GlycoTrans_28_N"/>
</dbReference>
<dbReference type="NCBIfam" id="TIGR01133">
    <property type="entry name" value="murG"/>
    <property type="match status" value="1"/>
</dbReference>
<dbReference type="PANTHER" id="PTHR21015:SF22">
    <property type="entry name" value="GLYCOSYLTRANSFERASE"/>
    <property type="match status" value="1"/>
</dbReference>
<dbReference type="PANTHER" id="PTHR21015">
    <property type="entry name" value="UDP-N-ACETYLGLUCOSAMINE--N-ACETYLMURAMYL-(PENTAPEPTIDE) PYROPHOSPHORYL-UNDECAPRENOL N-ACETYLGLUCOSAMINE TRANSFERASE 1"/>
    <property type="match status" value="1"/>
</dbReference>
<dbReference type="Pfam" id="PF04101">
    <property type="entry name" value="Glyco_tran_28_C"/>
    <property type="match status" value="1"/>
</dbReference>
<dbReference type="Pfam" id="PF03033">
    <property type="entry name" value="Glyco_transf_28"/>
    <property type="match status" value="1"/>
</dbReference>
<dbReference type="SUPFAM" id="SSF53756">
    <property type="entry name" value="UDP-Glycosyltransferase/glycogen phosphorylase"/>
    <property type="match status" value="1"/>
</dbReference>
<gene>
    <name evidence="1" type="primary">murG</name>
    <name type="ordered locus">ECED1_0091</name>
</gene>
<sequence>MSGQGKRLMVMAGGTGGHVFPGLAVAHHLMAQGWQVRWLGTADRMEADLVPKHGIEIDFIRISGLRGKGIKALIAAPLRIFNAWRQARAIMKAYKPDVVLGMGGYVSGPGGLAAWSLGIPVVLHEQNGIAGLTNKWLAKIATKVMQAFPGAFPNAEVVGNPVRTDVLALPLPQQRLAGREGPVRVLVVGGSQGARILNQTMPQVAAKLGDSVTIWHQSGKGSQQSVEQAYAEAGQPQHKVTEFIDDMAAAYAWADVVVCRSGALTVSEIAAAGLPALFVPFQHKDRQQYWNALPLEKAGAAKIIEQSQLSVDAVANTLAGWSRETLLTMAERARAASIPDATERVANEVSRAARA</sequence>
<feature type="chain" id="PRO_1000192130" description="UDP-N-acetylglucosamine--N-acetylmuramyl-(pentapeptide) pyrophosphoryl-undecaprenol N-acetylglucosamine transferase">
    <location>
        <begin position="1"/>
        <end position="355"/>
    </location>
</feature>
<feature type="binding site" evidence="1">
    <location>
        <begin position="15"/>
        <end position="17"/>
    </location>
    <ligand>
        <name>UDP-N-acetyl-alpha-D-glucosamine</name>
        <dbReference type="ChEBI" id="CHEBI:57705"/>
    </ligand>
</feature>
<feature type="binding site" evidence="1">
    <location>
        <position position="127"/>
    </location>
    <ligand>
        <name>UDP-N-acetyl-alpha-D-glucosamine</name>
        <dbReference type="ChEBI" id="CHEBI:57705"/>
    </ligand>
</feature>
<feature type="binding site" evidence="1">
    <location>
        <position position="163"/>
    </location>
    <ligand>
        <name>UDP-N-acetyl-alpha-D-glucosamine</name>
        <dbReference type="ChEBI" id="CHEBI:57705"/>
    </ligand>
</feature>
<feature type="binding site" evidence="1">
    <location>
        <position position="191"/>
    </location>
    <ligand>
        <name>UDP-N-acetyl-alpha-D-glucosamine</name>
        <dbReference type="ChEBI" id="CHEBI:57705"/>
    </ligand>
</feature>
<feature type="binding site" evidence="1">
    <location>
        <position position="244"/>
    </location>
    <ligand>
        <name>UDP-N-acetyl-alpha-D-glucosamine</name>
        <dbReference type="ChEBI" id="CHEBI:57705"/>
    </ligand>
</feature>
<feature type="binding site" evidence="1">
    <location>
        <begin position="263"/>
        <end position="268"/>
    </location>
    <ligand>
        <name>UDP-N-acetyl-alpha-D-glucosamine</name>
        <dbReference type="ChEBI" id="CHEBI:57705"/>
    </ligand>
</feature>
<feature type="binding site" evidence="1">
    <location>
        <position position="288"/>
    </location>
    <ligand>
        <name>UDP-N-acetyl-alpha-D-glucosamine</name>
        <dbReference type="ChEBI" id="CHEBI:57705"/>
    </ligand>
</feature>
<name>MURG_ECO81</name>
<accession>B7MNU9</accession>
<evidence type="ECO:0000255" key="1">
    <source>
        <dbReference type="HAMAP-Rule" id="MF_00033"/>
    </source>
</evidence>
<proteinExistence type="inferred from homology"/>
<keyword id="KW-0131">Cell cycle</keyword>
<keyword id="KW-0132">Cell division</keyword>
<keyword id="KW-0997">Cell inner membrane</keyword>
<keyword id="KW-1003">Cell membrane</keyword>
<keyword id="KW-0133">Cell shape</keyword>
<keyword id="KW-0961">Cell wall biogenesis/degradation</keyword>
<keyword id="KW-0328">Glycosyltransferase</keyword>
<keyword id="KW-0472">Membrane</keyword>
<keyword id="KW-0573">Peptidoglycan synthesis</keyword>
<keyword id="KW-0808">Transferase</keyword>
<protein>
    <recommendedName>
        <fullName evidence="1">UDP-N-acetylglucosamine--N-acetylmuramyl-(pentapeptide) pyrophosphoryl-undecaprenol N-acetylglucosamine transferase</fullName>
        <ecNumber evidence="1">2.4.1.227</ecNumber>
    </recommendedName>
    <alternativeName>
        <fullName evidence="1">Undecaprenyl-PP-MurNAc-pentapeptide-UDPGlcNAc GlcNAc transferase</fullName>
    </alternativeName>
</protein>
<comment type="function">
    <text evidence="1">Cell wall formation. Catalyzes the transfer of a GlcNAc subunit on undecaprenyl-pyrophosphoryl-MurNAc-pentapeptide (lipid intermediate I) to form undecaprenyl-pyrophosphoryl-MurNAc-(pentapeptide)GlcNAc (lipid intermediate II).</text>
</comment>
<comment type="catalytic activity">
    <reaction evidence="1">
        <text>di-trans,octa-cis-undecaprenyl diphospho-N-acetyl-alpha-D-muramoyl-L-alanyl-D-glutamyl-meso-2,6-diaminopimeloyl-D-alanyl-D-alanine + UDP-N-acetyl-alpha-D-glucosamine = di-trans,octa-cis-undecaprenyl diphospho-[N-acetyl-alpha-D-glucosaminyl-(1-&gt;4)]-N-acetyl-alpha-D-muramoyl-L-alanyl-D-glutamyl-meso-2,6-diaminopimeloyl-D-alanyl-D-alanine + UDP + H(+)</text>
        <dbReference type="Rhea" id="RHEA:31227"/>
        <dbReference type="ChEBI" id="CHEBI:15378"/>
        <dbReference type="ChEBI" id="CHEBI:57705"/>
        <dbReference type="ChEBI" id="CHEBI:58223"/>
        <dbReference type="ChEBI" id="CHEBI:61387"/>
        <dbReference type="ChEBI" id="CHEBI:61388"/>
        <dbReference type="EC" id="2.4.1.227"/>
    </reaction>
</comment>
<comment type="pathway">
    <text evidence="1">Cell wall biogenesis; peptidoglycan biosynthesis.</text>
</comment>
<comment type="subcellular location">
    <subcellularLocation>
        <location evidence="1">Cell inner membrane</location>
        <topology evidence="1">Peripheral membrane protein</topology>
        <orientation evidence="1">Cytoplasmic side</orientation>
    </subcellularLocation>
</comment>
<comment type="similarity">
    <text evidence="1">Belongs to the glycosyltransferase 28 family. MurG subfamily.</text>
</comment>